<gene>
    <name evidence="1" type="primary">dapF</name>
    <name type="ordered locus">CHY_1493</name>
</gene>
<keyword id="KW-0028">Amino-acid biosynthesis</keyword>
<keyword id="KW-0963">Cytoplasm</keyword>
<keyword id="KW-0413">Isomerase</keyword>
<keyword id="KW-0457">Lysine biosynthesis</keyword>
<keyword id="KW-1185">Reference proteome</keyword>
<feature type="chain" id="PRO_1000099224" description="Diaminopimelate epimerase">
    <location>
        <begin position="1"/>
        <end position="274"/>
    </location>
</feature>
<feature type="active site" description="Proton donor" evidence="1">
    <location>
        <position position="74"/>
    </location>
</feature>
<feature type="active site" description="Proton acceptor" evidence="1">
    <location>
        <position position="218"/>
    </location>
</feature>
<feature type="binding site" evidence="1">
    <location>
        <position position="11"/>
    </location>
    <ligand>
        <name>substrate</name>
    </ligand>
</feature>
<feature type="binding site" evidence="1">
    <location>
        <position position="65"/>
    </location>
    <ligand>
        <name>substrate</name>
    </ligand>
</feature>
<feature type="binding site" evidence="1">
    <location>
        <begin position="75"/>
        <end position="76"/>
    </location>
    <ligand>
        <name>substrate</name>
    </ligand>
</feature>
<feature type="binding site" evidence="1">
    <location>
        <position position="158"/>
    </location>
    <ligand>
        <name>substrate</name>
    </ligand>
</feature>
<feature type="binding site" evidence="1">
    <location>
        <position position="191"/>
    </location>
    <ligand>
        <name>substrate</name>
    </ligand>
</feature>
<feature type="binding site" evidence="1">
    <location>
        <begin position="209"/>
        <end position="210"/>
    </location>
    <ligand>
        <name>substrate</name>
    </ligand>
</feature>
<feature type="binding site" evidence="1">
    <location>
        <begin position="219"/>
        <end position="220"/>
    </location>
    <ligand>
        <name>substrate</name>
    </ligand>
</feature>
<feature type="site" description="Could be important to modulate the pK values of the two catalytic cysteine residues" evidence="1">
    <location>
        <position position="160"/>
    </location>
</feature>
<feature type="site" description="Could be important to modulate the pK values of the two catalytic cysteine residues" evidence="1">
    <location>
        <position position="209"/>
    </location>
</feature>
<protein>
    <recommendedName>
        <fullName evidence="1">Diaminopimelate epimerase</fullName>
        <shortName evidence="1">DAP epimerase</shortName>
        <ecNumber evidence="1">5.1.1.7</ecNumber>
    </recommendedName>
    <alternativeName>
        <fullName evidence="1">PLP-independent amino acid racemase</fullName>
    </alternativeName>
</protein>
<comment type="function">
    <text evidence="1">Catalyzes the stereoinversion of LL-2,6-diaminopimelate (L,L-DAP) to meso-diaminopimelate (meso-DAP), a precursor of L-lysine and an essential component of the bacterial peptidoglycan.</text>
</comment>
<comment type="catalytic activity">
    <reaction evidence="1">
        <text>(2S,6S)-2,6-diaminopimelate = meso-2,6-diaminopimelate</text>
        <dbReference type="Rhea" id="RHEA:15393"/>
        <dbReference type="ChEBI" id="CHEBI:57609"/>
        <dbReference type="ChEBI" id="CHEBI:57791"/>
        <dbReference type="EC" id="5.1.1.7"/>
    </reaction>
</comment>
<comment type="pathway">
    <text evidence="1">Amino-acid biosynthesis; L-lysine biosynthesis via DAP pathway; DL-2,6-diaminopimelate from LL-2,6-diaminopimelate: step 1/1.</text>
</comment>
<comment type="subunit">
    <text evidence="1">Homodimer.</text>
</comment>
<comment type="subcellular location">
    <subcellularLocation>
        <location evidence="1">Cytoplasm</location>
    </subcellularLocation>
</comment>
<comment type="similarity">
    <text evidence="1">Belongs to the diaminopimelate epimerase family.</text>
</comment>
<reference key="1">
    <citation type="journal article" date="2005" name="PLoS Genet.">
        <title>Life in hot carbon monoxide: the complete genome sequence of Carboxydothermus hydrogenoformans Z-2901.</title>
        <authorList>
            <person name="Wu M."/>
            <person name="Ren Q."/>
            <person name="Durkin A.S."/>
            <person name="Daugherty S.C."/>
            <person name="Brinkac L.M."/>
            <person name="Dodson R.J."/>
            <person name="Madupu R."/>
            <person name="Sullivan S.A."/>
            <person name="Kolonay J.F."/>
            <person name="Nelson W.C."/>
            <person name="Tallon L.J."/>
            <person name="Jones K.M."/>
            <person name="Ulrich L.E."/>
            <person name="Gonzalez J.M."/>
            <person name="Zhulin I.B."/>
            <person name="Robb F.T."/>
            <person name="Eisen J.A."/>
        </authorList>
    </citation>
    <scope>NUCLEOTIDE SEQUENCE [LARGE SCALE GENOMIC DNA]</scope>
    <source>
        <strain>ATCC BAA-161 / DSM 6008 / Z-2901</strain>
    </source>
</reference>
<proteinExistence type="inferred from homology"/>
<dbReference type="EC" id="5.1.1.7" evidence="1"/>
<dbReference type="EMBL" id="CP000141">
    <property type="protein sequence ID" value="ABB15332.1"/>
    <property type="molecule type" value="Genomic_DNA"/>
</dbReference>
<dbReference type="RefSeq" id="WP_011344400.1">
    <property type="nucleotide sequence ID" value="NC_007503.1"/>
</dbReference>
<dbReference type="SMR" id="Q3AC09"/>
<dbReference type="FunCoup" id="Q3AC09">
    <property type="interactions" value="460"/>
</dbReference>
<dbReference type="STRING" id="246194.CHY_1493"/>
<dbReference type="KEGG" id="chy:CHY_1493"/>
<dbReference type="eggNOG" id="COG0253">
    <property type="taxonomic scope" value="Bacteria"/>
</dbReference>
<dbReference type="HOGENOM" id="CLU_053306_3_0_9"/>
<dbReference type="InParanoid" id="Q3AC09"/>
<dbReference type="OrthoDB" id="9805408at2"/>
<dbReference type="UniPathway" id="UPA00034">
    <property type="reaction ID" value="UER00025"/>
</dbReference>
<dbReference type="Proteomes" id="UP000002706">
    <property type="component" value="Chromosome"/>
</dbReference>
<dbReference type="GO" id="GO:0005829">
    <property type="term" value="C:cytosol"/>
    <property type="evidence" value="ECO:0007669"/>
    <property type="project" value="TreeGrafter"/>
</dbReference>
<dbReference type="GO" id="GO:0008837">
    <property type="term" value="F:diaminopimelate epimerase activity"/>
    <property type="evidence" value="ECO:0007669"/>
    <property type="project" value="UniProtKB-UniRule"/>
</dbReference>
<dbReference type="GO" id="GO:0009089">
    <property type="term" value="P:lysine biosynthetic process via diaminopimelate"/>
    <property type="evidence" value="ECO:0007669"/>
    <property type="project" value="UniProtKB-UniRule"/>
</dbReference>
<dbReference type="FunFam" id="3.10.310.10:FF:000001">
    <property type="entry name" value="Diaminopimelate epimerase"/>
    <property type="match status" value="1"/>
</dbReference>
<dbReference type="Gene3D" id="3.10.310.10">
    <property type="entry name" value="Diaminopimelate Epimerase, Chain A, domain 1"/>
    <property type="match status" value="2"/>
</dbReference>
<dbReference type="HAMAP" id="MF_00197">
    <property type="entry name" value="DAP_epimerase"/>
    <property type="match status" value="1"/>
</dbReference>
<dbReference type="InterPro" id="IPR018510">
    <property type="entry name" value="DAP_epimerase_AS"/>
</dbReference>
<dbReference type="InterPro" id="IPR001653">
    <property type="entry name" value="DAP_epimerase_DapF"/>
</dbReference>
<dbReference type="NCBIfam" id="TIGR00652">
    <property type="entry name" value="DapF"/>
    <property type="match status" value="1"/>
</dbReference>
<dbReference type="PANTHER" id="PTHR31689:SF0">
    <property type="entry name" value="DIAMINOPIMELATE EPIMERASE"/>
    <property type="match status" value="1"/>
</dbReference>
<dbReference type="PANTHER" id="PTHR31689">
    <property type="entry name" value="DIAMINOPIMELATE EPIMERASE, CHLOROPLASTIC"/>
    <property type="match status" value="1"/>
</dbReference>
<dbReference type="Pfam" id="PF01678">
    <property type="entry name" value="DAP_epimerase"/>
    <property type="match status" value="2"/>
</dbReference>
<dbReference type="SUPFAM" id="SSF54506">
    <property type="entry name" value="Diaminopimelate epimerase-like"/>
    <property type="match status" value="1"/>
</dbReference>
<dbReference type="PROSITE" id="PS01326">
    <property type="entry name" value="DAP_EPIMERASE"/>
    <property type="match status" value="1"/>
</dbReference>
<organism>
    <name type="scientific">Carboxydothermus hydrogenoformans (strain ATCC BAA-161 / DSM 6008 / Z-2901)</name>
    <dbReference type="NCBI Taxonomy" id="246194"/>
    <lineage>
        <taxon>Bacteria</taxon>
        <taxon>Bacillati</taxon>
        <taxon>Bacillota</taxon>
        <taxon>Clostridia</taxon>
        <taxon>Thermoanaerobacterales</taxon>
        <taxon>Thermoanaerobacteraceae</taxon>
        <taxon>Carboxydothermus</taxon>
    </lineage>
</organism>
<name>DAPF_CARHZ</name>
<evidence type="ECO:0000255" key="1">
    <source>
        <dbReference type="HAMAP-Rule" id="MF_00197"/>
    </source>
</evidence>
<accession>Q3AC09</accession>
<sequence>MEFLKMHGLGNDFVVVDEIKNQNLVNKNLSDLAKKICDRRFGIGADGLVLLLPSEKADFKMRIINSDGSEAEMCGNAIRCVARYYVEKYNPAKKQLEVETLAGIIKPEVLENNMVRVDMGRPILKPQEIPVAVEEEPVNIPLEVLGQKFYFTAVSMGNPHAVIFVDSLAKIELEKYGPLIETHPLFPRKTNVEFVEILSPAKVKVFVWERGAGATLACGTGASAVVVAGRILGHLQEDVEVVLPGGSLFINWVFGESVYMTGPAEIVFKGEYFL</sequence>